<sequence length="59" mass="6646">MAHKFLIKKNKAGEFVAYFVYNSETIFWTEGYASKASAKNAIESIKKNGPEAEIDDQTD</sequence>
<accession>Q9A478</accession>
<reference key="1">
    <citation type="journal article" date="2001" name="Proc. Natl. Acad. Sci. U.S.A.">
        <title>Complete genome sequence of Caulobacter crescentus.</title>
        <authorList>
            <person name="Nierman W.C."/>
            <person name="Feldblyum T.V."/>
            <person name="Laub M.T."/>
            <person name="Paulsen I.T."/>
            <person name="Nelson K.E."/>
            <person name="Eisen J.A."/>
            <person name="Heidelberg J.F."/>
            <person name="Alley M.R.K."/>
            <person name="Ohta N."/>
            <person name="Maddock J.R."/>
            <person name="Potocka I."/>
            <person name="Nelson W.C."/>
            <person name="Newton A."/>
            <person name="Stephens C."/>
            <person name="Phadke N.D."/>
            <person name="Ely B."/>
            <person name="DeBoy R.T."/>
            <person name="Dodson R.J."/>
            <person name="Durkin A.S."/>
            <person name="Gwinn M.L."/>
            <person name="Haft D.H."/>
            <person name="Kolonay J.F."/>
            <person name="Smit J."/>
            <person name="Craven M.B."/>
            <person name="Khouri H.M."/>
            <person name="Shetty J."/>
            <person name="Berry K.J."/>
            <person name="Utterback T.R."/>
            <person name="Tran K."/>
            <person name="Wolf A.M."/>
            <person name="Vamathevan J.J."/>
            <person name="Ermolaeva M.D."/>
            <person name="White O."/>
            <person name="Salzberg S.L."/>
            <person name="Venter J.C."/>
            <person name="Shapiro L."/>
            <person name="Fraser C.M."/>
        </authorList>
    </citation>
    <scope>NUCLEOTIDE SEQUENCE [LARGE SCALE GENOMIC DNA]</scope>
    <source>
        <strain>ATCC 19089 / CIP 103742 / CB 15</strain>
    </source>
</reference>
<protein>
    <recommendedName>
        <fullName>UPF0339 protein CC_2965</fullName>
    </recommendedName>
</protein>
<evidence type="ECO:0000305" key="1"/>
<organism>
    <name type="scientific">Caulobacter vibrioides (strain ATCC 19089 / CIP 103742 / CB 15)</name>
    <name type="common">Caulobacter crescentus</name>
    <dbReference type="NCBI Taxonomy" id="190650"/>
    <lineage>
        <taxon>Bacteria</taxon>
        <taxon>Pseudomonadati</taxon>
        <taxon>Pseudomonadota</taxon>
        <taxon>Alphaproteobacteria</taxon>
        <taxon>Caulobacterales</taxon>
        <taxon>Caulobacteraceae</taxon>
        <taxon>Caulobacter</taxon>
    </lineage>
</organism>
<feature type="chain" id="PRO_0000218134" description="UPF0339 protein CC_2965">
    <location>
        <begin position="1"/>
        <end position="59"/>
    </location>
</feature>
<comment type="similarity">
    <text evidence="1">Belongs to the UPF0339 family.</text>
</comment>
<proteinExistence type="inferred from homology"/>
<keyword id="KW-1185">Reference proteome</keyword>
<dbReference type="EMBL" id="AE005673">
    <property type="protein sequence ID" value="AAK24927.1"/>
    <property type="molecule type" value="Genomic_DNA"/>
</dbReference>
<dbReference type="PIR" id="C87616">
    <property type="entry name" value="C87616"/>
</dbReference>
<dbReference type="RefSeq" id="NP_421759.1">
    <property type="nucleotide sequence ID" value="NC_002696.2"/>
</dbReference>
<dbReference type="RefSeq" id="WP_010920802.1">
    <property type="nucleotide sequence ID" value="NC_002696.2"/>
</dbReference>
<dbReference type="SMR" id="Q9A478"/>
<dbReference type="STRING" id="190650.CC_2965"/>
<dbReference type="EnsemblBacteria" id="AAK24927">
    <property type="protein sequence ID" value="AAK24927"/>
    <property type="gene ID" value="CC_2965"/>
</dbReference>
<dbReference type="KEGG" id="ccr:CC_2965"/>
<dbReference type="PATRIC" id="fig|190650.5.peg.2970"/>
<dbReference type="eggNOG" id="COG3422">
    <property type="taxonomic scope" value="Bacteria"/>
</dbReference>
<dbReference type="HOGENOM" id="CLU_163886_1_1_5"/>
<dbReference type="BioCyc" id="CAULO:CC2965-MONOMER"/>
<dbReference type="Proteomes" id="UP000001816">
    <property type="component" value="Chromosome"/>
</dbReference>
<dbReference type="Gene3D" id="2.30.29.80">
    <property type="match status" value="1"/>
</dbReference>
<dbReference type="InterPro" id="IPR010879">
    <property type="entry name" value="DUF1508"/>
</dbReference>
<dbReference type="InterPro" id="IPR036913">
    <property type="entry name" value="YegP-like_sf"/>
</dbReference>
<dbReference type="Pfam" id="PF07411">
    <property type="entry name" value="DUF1508"/>
    <property type="match status" value="1"/>
</dbReference>
<dbReference type="SUPFAM" id="SSF160113">
    <property type="entry name" value="YegP-like"/>
    <property type="match status" value="1"/>
</dbReference>
<gene>
    <name type="ordered locus">CC_2965</name>
</gene>
<name>Y2965_CAUVC</name>